<sequence>MNPIVSGASVIAAGLAIGLASIGPGIGQGTAAAQAVEGLARQPEAEGKIRGTLLLSLAFMESLTIYGLVVALCLLFANPFAG</sequence>
<organism>
    <name type="scientific">Emiliania huxleyi</name>
    <name type="common">Coccolithophore</name>
    <name type="synonym">Pontosphaera huxleyi</name>
    <dbReference type="NCBI Taxonomy" id="2903"/>
    <lineage>
        <taxon>Eukaryota</taxon>
        <taxon>Haptista</taxon>
        <taxon>Haptophyta</taxon>
        <taxon>Prymnesiophyceae</taxon>
        <taxon>Isochrysidales</taxon>
        <taxon>Noelaerhabdaceae</taxon>
        <taxon>Emiliania</taxon>
    </lineage>
</organism>
<evidence type="ECO:0000255" key="1">
    <source>
        <dbReference type="HAMAP-Rule" id="MF_01396"/>
    </source>
</evidence>
<gene>
    <name evidence="1" type="primary">atpH</name>
</gene>
<reference key="1">
    <citation type="journal article" date="2006" name="J. Mol. Evol.">
        <title>Rate variation as a function of gene origin in plastid-derived genes of peridinin-containing dinoflagellates.</title>
        <authorList>
            <person name="Bachvaroff T.R."/>
            <person name="Sanchez-Puerta M.V."/>
            <person name="Delwiche C.F."/>
        </authorList>
    </citation>
    <scope>NUCLEOTIDE SEQUENCE [GENOMIC DNA]</scope>
    <source>
        <strain>CCMP373 / CSIRO-CS-57 / BT6</strain>
    </source>
</reference>
<reference key="2">
    <citation type="journal article" date="2005" name="DNA Res.">
        <title>The complete plastid genome sequence of the haptophyte Emiliania huxleyi: a comparison to other plastid genomes.</title>
        <authorList>
            <person name="Sanchez-Puerta M.V."/>
            <person name="Bachvaroff T.R."/>
            <person name="Delwiche C.F."/>
        </authorList>
    </citation>
    <scope>NUCLEOTIDE SEQUENCE [LARGE SCALE GENOMIC DNA]</scope>
    <source>
        <strain>CCMP373 / CSIRO-CS-57 / BT6</strain>
    </source>
</reference>
<accession>Q4G3A1</accession>
<dbReference type="EMBL" id="AY704576">
    <property type="protein sequence ID" value="AAU81915.1"/>
    <property type="molecule type" value="Genomic_DNA"/>
</dbReference>
<dbReference type="EMBL" id="AY741371">
    <property type="protein sequence ID" value="AAX13865.1"/>
    <property type="molecule type" value="Genomic_DNA"/>
</dbReference>
<dbReference type="RefSeq" id="YP_277366.1">
    <property type="nucleotide sequence ID" value="NC_007288.1"/>
</dbReference>
<dbReference type="SMR" id="Q4G3A1"/>
<dbReference type="STRING" id="2903.Q4G3A1"/>
<dbReference type="GeneID" id="3562442"/>
<dbReference type="GO" id="GO:0009535">
    <property type="term" value="C:chloroplast thylakoid membrane"/>
    <property type="evidence" value="ECO:0007669"/>
    <property type="project" value="UniProtKB-SubCell"/>
</dbReference>
<dbReference type="GO" id="GO:0045259">
    <property type="term" value="C:proton-transporting ATP synthase complex"/>
    <property type="evidence" value="ECO:0007669"/>
    <property type="project" value="UniProtKB-KW"/>
</dbReference>
<dbReference type="GO" id="GO:0033177">
    <property type="term" value="C:proton-transporting two-sector ATPase complex, proton-transporting domain"/>
    <property type="evidence" value="ECO:0007669"/>
    <property type="project" value="InterPro"/>
</dbReference>
<dbReference type="GO" id="GO:0008289">
    <property type="term" value="F:lipid binding"/>
    <property type="evidence" value="ECO:0007669"/>
    <property type="project" value="UniProtKB-KW"/>
</dbReference>
<dbReference type="GO" id="GO:0046933">
    <property type="term" value="F:proton-transporting ATP synthase activity, rotational mechanism"/>
    <property type="evidence" value="ECO:0007669"/>
    <property type="project" value="UniProtKB-UniRule"/>
</dbReference>
<dbReference type="CDD" id="cd18183">
    <property type="entry name" value="ATP-synt_Fo_c_ATPH"/>
    <property type="match status" value="1"/>
</dbReference>
<dbReference type="FunFam" id="1.20.20.10:FF:000001">
    <property type="entry name" value="ATP synthase subunit c, chloroplastic"/>
    <property type="match status" value="1"/>
</dbReference>
<dbReference type="Gene3D" id="1.20.20.10">
    <property type="entry name" value="F1F0 ATP synthase subunit C"/>
    <property type="match status" value="1"/>
</dbReference>
<dbReference type="HAMAP" id="MF_01396">
    <property type="entry name" value="ATP_synth_c_bact"/>
    <property type="match status" value="1"/>
</dbReference>
<dbReference type="InterPro" id="IPR005953">
    <property type="entry name" value="ATP_synth_csu_bac/chlpt"/>
</dbReference>
<dbReference type="InterPro" id="IPR000454">
    <property type="entry name" value="ATP_synth_F0_csu"/>
</dbReference>
<dbReference type="InterPro" id="IPR020537">
    <property type="entry name" value="ATP_synth_F0_csu_DDCD_BS"/>
</dbReference>
<dbReference type="InterPro" id="IPR038662">
    <property type="entry name" value="ATP_synth_F0_csu_sf"/>
</dbReference>
<dbReference type="InterPro" id="IPR002379">
    <property type="entry name" value="ATPase_proteolipid_c-like_dom"/>
</dbReference>
<dbReference type="InterPro" id="IPR035921">
    <property type="entry name" value="F/V-ATP_Csub_sf"/>
</dbReference>
<dbReference type="NCBIfam" id="TIGR01260">
    <property type="entry name" value="ATP_synt_c"/>
    <property type="match status" value="1"/>
</dbReference>
<dbReference type="NCBIfam" id="NF005608">
    <property type="entry name" value="PRK07354.1"/>
    <property type="match status" value="1"/>
</dbReference>
<dbReference type="PANTHER" id="PTHR10031">
    <property type="entry name" value="ATP SYNTHASE LIPID-BINDING PROTEIN, MITOCHONDRIAL"/>
    <property type="match status" value="1"/>
</dbReference>
<dbReference type="PANTHER" id="PTHR10031:SF0">
    <property type="entry name" value="ATPASE PROTEIN 9"/>
    <property type="match status" value="1"/>
</dbReference>
<dbReference type="Pfam" id="PF00137">
    <property type="entry name" value="ATP-synt_C"/>
    <property type="match status" value="1"/>
</dbReference>
<dbReference type="PRINTS" id="PR00124">
    <property type="entry name" value="ATPASEC"/>
</dbReference>
<dbReference type="SUPFAM" id="SSF81333">
    <property type="entry name" value="F1F0 ATP synthase subunit C"/>
    <property type="match status" value="1"/>
</dbReference>
<dbReference type="PROSITE" id="PS00605">
    <property type="entry name" value="ATPASE_C"/>
    <property type="match status" value="1"/>
</dbReference>
<geneLocation type="chloroplast"/>
<protein>
    <recommendedName>
        <fullName evidence="1">ATP synthase subunit c, chloroplastic</fullName>
    </recommendedName>
    <alternativeName>
        <fullName evidence="1">ATP synthase F(0) sector subunit c</fullName>
    </alternativeName>
    <alternativeName>
        <fullName evidence="1">ATPase subunit III</fullName>
    </alternativeName>
    <alternativeName>
        <fullName evidence="1">F-type ATPase subunit c</fullName>
        <shortName evidence="1">F-ATPase subunit c</shortName>
    </alternativeName>
    <alternativeName>
        <fullName evidence="1">Lipid-binding protein</fullName>
    </alternativeName>
</protein>
<comment type="function">
    <text evidence="1">F(1)F(0) ATP synthase produces ATP from ADP in the presence of a proton or sodium gradient. F-type ATPases consist of two structural domains, F(1) containing the extramembraneous catalytic core and F(0) containing the membrane proton channel, linked together by a central stalk and a peripheral stalk. During catalysis, ATP synthesis in the catalytic domain of F(1) is coupled via a rotary mechanism of the central stalk subunits to proton translocation.</text>
</comment>
<comment type="function">
    <text evidence="1">Key component of the F(0) channel; it plays a direct role in translocation across the membrane. A homomeric c-ring of between 10-14 subunits forms the central stalk rotor element with the F(1) delta and epsilon subunits.</text>
</comment>
<comment type="subunit">
    <text evidence="1">F-type ATPases have 2 components, F(1) - the catalytic core - and F(0) - the membrane proton channel. F(1) has five subunits: alpha(3), beta(3), gamma(1), delta(1), epsilon(1). F(0) has four main subunits: a(1), b(1), b'(1) and c(10-14). The alpha and beta chains form an alternating ring which encloses part of the gamma chain. F(1) is attached to F(0) by a central stalk formed by the gamma and epsilon chains, while a peripheral stalk is formed by the delta, b and b' chains.</text>
</comment>
<comment type="subcellular location">
    <subcellularLocation>
        <location evidence="1">Plastid</location>
        <location evidence="1">Chloroplast thylakoid membrane</location>
        <topology evidence="1">Multi-pass membrane protein</topology>
    </subcellularLocation>
</comment>
<comment type="miscellaneous">
    <text>In plastids the F-type ATPase is also known as CF(1)CF(0).</text>
</comment>
<comment type="similarity">
    <text evidence="1">Belongs to the ATPase C chain family.</text>
</comment>
<keyword id="KW-0066">ATP synthesis</keyword>
<keyword id="KW-0138">CF(0)</keyword>
<keyword id="KW-0150">Chloroplast</keyword>
<keyword id="KW-0375">Hydrogen ion transport</keyword>
<keyword id="KW-0406">Ion transport</keyword>
<keyword id="KW-0446">Lipid-binding</keyword>
<keyword id="KW-0472">Membrane</keyword>
<keyword id="KW-0934">Plastid</keyword>
<keyword id="KW-0793">Thylakoid</keyword>
<keyword id="KW-0812">Transmembrane</keyword>
<keyword id="KW-1133">Transmembrane helix</keyword>
<keyword id="KW-0813">Transport</keyword>
<name>ATPH_EMIHU</name>
<feature type="chain" id="PRO_0000362972" description="ATP synthase subunit c, chloroplastic">
    <location>
        <begin position="1"/>
        <end position="82"/>
    </location>
</feature>
<feature type="transmembrane region" description="Helical" evidence="1">
    <location>
        <begin position="7"/>
        <end position="27"/>
    </location>
</feature>
<feature type="transmembrane region" description="Helical" evidence="1">
    <location>
        <begin position="57"/>
        <end position="77"/>
    </location>
</feature>
<feature type="site" description="Reversibly protonated during proton transport" evidence="1">
    <location>
        <position position="61"/>
    </location>
</feature>
<proteinExistence type="inferred from homology"/>